<name>PSAA_SOLBU</name>
<gene>
    <name evidence="1" type="primary">psaA</name>
</gene>
<feature type="chain" id="PRO_0000275962" description="Photosystem I P700 chlorophyll a apoprotein A1">
    <location>
        <begin position="1"/>
        <end position="750"/>
    </location>
</feature>
<feature type="transmembrane region" description="Helical; Name=I" evidence="1">
    <location>
        <begin position="70"/>
        <end position="93"/>
    </location>
</feature>
<feature type="transmembrane region" description="Helical; Name=II" evidence="1">
    <location>
        <begin position="156"/>
        <end position="179"/>
    </location>
</feature>
<feature type="transmembrane region" description="Helical; Name=III" evidence="1">
    <location>
        <begin position="195"/>
        <end position="219"/>
    </location>
</feature>
<feature type="transmembrane region" description="Helical; Name=IV" evidence="1">
    <location>
        <begin position="291"/>
        <end position="309"/>
    </location>
</feature>
<feature type="transmembrane region" description="Helical; Name=V" evidence="1">
    <location>
        <begin position="346"/>
        <end position="369"/>
    </location>
</feature>
<feature type="transmembrane region" description="Helical; Name=VI" evidence="1">
    <location>
        <begin position="385"/>
        <end position="411"/>
    </location>
</feature>
<feature type="transmembrane region" description="Helical; Name=VII" evidence="1">
    <location>
        <begin position="433"/>
        <end position="455"/>
    </location>
</feature>
<feature type="transmembrane region" description="Helical; Name=VIII" evidence="1">
    <location>
        <begin position="531"/>
        <end position="549"/>
    </location>
</feature>
<feature type="transmembrane region" description="Helical; Name=IX" evidence="1">
    <location>
        <begin position="589"/>
        <end position="610"/>
    </location>
</feature>
<feature type="transmembrane region" description="Helical; Name=X" evidence="1">
    <location>
        <begin position="664"/>
        <end position="686"/>
    </location>
</feature>
<feature type="transmembrane region" description="Helical; Name=XI" evidence="1">
    <location>
        <begin position="724"/>
        <end position="744"/>
    </location>
</feature>
<feature type="binding site" evidence="1">
    <location>
        <position position="573"/>
    </location>
    <ligand>
        <name>[4Fe-4S] cluster</name>
        <dbReference type="ChEBI" id="CHEBI:49883"/>
        <note>ligand shared between dimeric partners</note>
    </ligand>
</feature>
<feature type="binding site" evidence="1">
    <location>
        <position position="582"/>
    </location>
    <ligand>
        <name>[4Fe-4S] cluster</name>
        <dbReference type="ChEBI" id="CHEBI:49883"/>
        <note>ligand shared between dimeric partners</note>
    </ligand>
</feature>
<feature type="binding site" description="axial binding residue" evidence="1">
    <location>
        <position position="675"/>
    </location>
    <ligand>
        <name>chlorophyll a'</name>
        <dbReference type="ChEBI" id="CHEBI:189419"/>
        <label>A1</label>
    </ligand>
    <ligandPart>
        <name>Mg</name>
        <dbReference type="ChEBI" id="CHEBI:25107"/>
    </ligandPart>
</feature>
<feature type="binding site" description="axial binding residue" evidence="1">
    <location>
        <position position="683"/>
    </location>
    <ligand>
        <name>chlorophyll a</name>
        <dbReference type="ChEBI" id="CHEBI:58416"/>
        <label>A3</label>
    </ligand>
    <ligandPart>
        <name>Mg</name>
        <dbReference type="ChEBI" id="CHEBI:25107"/>
    </ligandPart>
</feature>
<feature type="binding site" evidence="1">
    <location>
        <position position="691"/>
    </location>
    <ligand>
        <name>chlorophyll a</name>
        <dbReference type="ChEBI" id="CHEBI:58416"/>
        <label>A3</label>
    </ligand>
</feature>
<feature type="binding site" evidence="1">
    <location>
        <position position="692"/>
    </location>
    <ligand>
        <name>phylloquinone</name>
        <dbReference type="ChEBI" id="CHEBI:18067"/>
        <label>A</label>
    </ligand>
</feature>
<dbReference type="EC" id="1.97.1.12" evidence="1"/>
<dbReference type="EMBL" id="DQ347958">
    <property type="protein sequence ID" value="ABC56213.1"/>
    <property type="molecule type" value="Genomic_DNA"/>
</dbReference>
<dbReference type="RefSeq" id="YP_538848.1">
    <property type="nucleotide sequence ID" value="NC_007943.1"/>
</dbReference>
<dbReference type="SMR" id="Q2MII7"/>
<dbReference type="GeneID" id="3989536"/>
<dbReference type="GO" id="GO:0009535">
    <property type="term" value="C:chloroplast thylakoid membrane"/>
    <property type="evidence" value="ECO:0007669"/>
    <property type="project" value="UniProtKB-SubCell"/>
</dbReference>
<dbReference type="GO" id="GO:0009522">
    <property type="term" value="C:photosystem I"/>
    <property type="evidence" value="ECO:0007669"/>
    <property type="project" value="UniProtKB-KW"/>
</dbReference>
<dbReference type="GO" id="GO:0051539">
    <property type="term" value="F:4 iron, 4 sulfur cluster binding"/>
    <property type="evidence" value="ECO:0007669"/>
    <property type="project" value="UniProtKB-KW"/>
</dbReference>
<dbReference type="GO" id="GO:0016168">
    <property type="term" value="F:chlorophyll binding"/>
    <property type="evidence" value="ECO:0007669"/>
    <property type="project" value="UniProtKB-KW"/>
</dbReference>
<dbReference type="GO" id="GO:0009055">
    <property type="term" value="F:electron transfer activity"/>
    <property type="evidence" value="ECO:0007669"/>
    <property type="project" value="UniProtKB-UniRule"/>
</dbReference>
<dbReference type="GO" id="GO:0000287">
    <property type="term" value="F:magnesium ion binding"/>
    <property type="evidence" value="ECO:0007669"/>
    <property type="project" value="UniProtKB-UniRule"/>
</dbReference>
<dbReference type="GO" id="GO:0016491">
    <property type="term" value="F:oxidoreductase activity"/>
    <property type="evidence" value="ECO:0007669"/>
    <property type="project" value="UniProtKB-KW"/>
</dbReference>
<dbReference type="GO" id="GO:0015979">
    <property type="term" value="P:photosynthesis"/>
    <property type="evidence" value="ECO:0007669"/>
    <property type="project" value="UniProtKB-UniRule"/>
</dbReference>
<dbReference type="FunFam" id="1.20.1130.10:FF:000001">
    <property type="entry name" value="Photosystem I P700 chlorophyll a apoprotein A2"/>
    <property type="match status" value="1"/>
</dbReference>
<dbReference type="Gene3D" id="1.20.1130.10">
    <property type="entry name" value="Photosystem I PsaA/PsaB"/>
    <property type="match status" value="1"/>
</dbReference>
<dbReference type="HAMAP" id="MF_00458">
    <property type="entry name" value="PSI_PsaA"/>
    <property type="match status" value="1"/>
</dbReference>
<dbReference type="InterPro" id="IPR006243">
    <property type="entry name" value="PSI_PsaA"/>
</dbReference>
<dbReference type="InterPro" id="IPR001280">
    <property type="entry name" value="PSI_PsaA/B"/>
</dbReference>
<dbReference type="InterPro" id="IPR020586">
    <property type="entry name" value="PSI_PsaA/B_CS"/>
</dbReference>
<dbReference type="InterPro" id="IPR036408">
    <property type="entry name" value="PSI_PsaA/B_sf"/>
</dbReference>
<dbReference type="NCBIfam" id="TIGR01335">
    <property type="entry name" value="psaA"/>
    <property type="match status" value="1"/>
</dbReference>
<dbReference type="PANTHER" id="PTHR30128">
    <property type="entry name" value="OUTER MEMBRANE PROTEIN, OMPA-RELATED"/>
    <property type="match status" value="1"/>
</dbReference>
<dbReference type="PANTHER" id="PTHR30128:SF19">
    <property type="entry name" value="PHOTOSYSTEM I P700 CHLOROPHYLL A APOPROTEIN A1-RELATED"/>
    <property type="match status" value="1"/>
</dbReference>
<dbReference type="Pfam" id="PF00223">
    <property type="entry name" value="PsaA_PsaB"/>
    <property type="match status" value="1"/>
</dbReference>
<dbReference type="PIRSF" id="PIRSF002905">
    <property type="entry name" value="PSI_A"/>
    <property type="match status" value="1"/>
</dbReference>
<dbReference type="PRINTS" id="PR00257">
    <property type="entry name" value="PHOTSYSPSAAB"/>
</dbReference>
<dbReference type="SUPFAM" id="SSF81558">
    <property type="entry name" value="Photosystem I subunits PsaA/PsaB"/>
    <property type="match status" value="1"/>
</dbReference>
<dbReference type="PROSITE" id="PS00419">
    <property type="entry name" value="PHOTOSYSTEM_I_PSAAB"/>
    <property type="match status" value="1"/>
</dbReference>
<comment type="function">
    <text>PsaA and PsaB bind P700, the primary electron donor of photosystem I (PSI), as well as the electron acceptors A0, A1 and FX. PSI is a plastocyanin-ferredoxin oxidoreductase, converting photonic excitation into a charge separation, which transfers an electron from the donor P700 chlorophyll pair to the spectroscopically characterized acceptors A0, A1, FX, FA and FB in turn. Oxidized P700 is reduced on the lumenal side of the thylakoid membrane by plastocyanin.</text>
</comment>
<comment type="catalytic activity">
    <reaction evidence="1">
        <text>reduced [plastocyanin] + hnu + oxidized [2Fe-2S]-[ferredoxin] = oxidized [plastocyanin] + reduced [2Fe-2S]-[ferredoxin]</text>
        <dbReference type="Rhea" id="RHEA:30407"/>
        <dbReference type="Rhea" id="RHEA-COMP:10000"/>
        <dbReference type="Rhea" id="RHEA-COMP:10001"/>
        <dbReference type="Rhea" id="RHEA-COMP:10039"/>
        <dbReference type="Rhea" id="RHEA-COMP:10040"/>
        <dbReference type="ChEBI" id="CHEBI:29036"/>
        <dbReference type="ChEBI" id="CHEBI:30212"/>
        <dbReference type="ChEBI" id="CHEBI:33737"/>
        <dbReference type="ChEBI" id="CHEBI:33738"/>
        <dbReference type="ChEBI" id="CHEBI:49552"/>
        <dbReference type="EC" id="1.97.1.12"/>
    </reaction>
</comment>
<comment type="cofactor">
    <text evidence="1">P700 is a chlorophyll a/chlorophyll a' dimer, A0 is one or more chlorophyll a, A1 is one or both phylloquinones and FX is a shared 4Fe-4S iron-sulfur center.</text>
</comment>
<comment type="subunit">
    <text evidence="1">The PsaA/B heterodimer binds the P700 chlorophyll special pair and subsequent electron acceptors. PSI consists of a core antenna complex that captures photons, and an electron transfer chain that converts photonic excitation into a charge separation. The eukaryotic PSI reaction center is composed of at least 11 subunits.</text>
</comment>
<comment type="subcellular location">
    <subcellularLocation>
        <location evidence="1">Plastid</location>
        <location evidence="1">Chloroplast thylakoid membrane</location>
        <topology evidence="1">Multi-pass membrane protein</topology>
    </subcellularLocation>
</comment>
<comment type="similarity">
    <text evidence="1">Belongs to the PsaA/PsaB family.</text>
</comment>
<protein>
    <recommendedName>
        <fullName evidence="1">Photosystem I P700 chlorophyll a apoprotein A1</fullName>
        <ecNumber evidence="1">1.97.1.12</ecNumber>
    </recommendedName>
    <alternativeName>
        <fullName evidence="1">PSI-A</fullName>
    </alternativeName>
    <alternativeName>
        <fullName evidence="1">PsaA</fullName>
    </alternativeName>
</protein>
<evidence type="ECO:0000255" key="1">
    <source>
        <dbReference type="HAMAP-Rule" id="MF_00458"/>
    </source>
</evidence>
<reference key="1">
    <citation type="journal article" date="2006" name="Theor. Appl. Genet.">
        <title>Complete chloroplast genome sequences of Solanum bulbocastanum, Solanum lycopersicum and comparative analyses with other Solanaceae genomes.</title>
        <authorList>
            <person name="Daniell H."/>
            <person name="Lee S.-B."/>
            <person name="Grevich J."/>
            <person name="Saski C."/>
            <person name="Quesada-Vargas T."/>
            <person name="Guda C."/>
            <person name="Tomkins J."/>
            <person name="Jansen R.K."/>
        </authorList>
    </citation>
    <scope>NUCLEOTIDE SEQUENCE [LARGE SCALE GENOMIC DNA]</scope>
    <source>
        <strain>cv. PT29</strain>
    </source>
</reference>
<organism>
    <name type="scientific">Solanum bulbocastanum</name>
    <name type="common">Wild potato</name>
    <dbReference type="NCBI Taxonomy" id="147425"/>
    <lineage>
        <taxon>Eukaryota</taxon>
        <taxon>Viridiplantae</taxon>
        <taxon>Streptophyta</taxon>
        <taxon>Embryophyta</taxon>
        <taxon>Tracheophyta</taxon>
        <taxon>Spermatophyta</taxon>
        <taxon>Magnoliopsida</taxon>
        <taxon>eudicotyledons</taxon>
        <taxon>Gunneridae</taxon>
        <taxon>Pentapetalae</taxon>
        <taxon>asterids</taxon>
        <taxon>lamiids</taxon>
        <taxon>Solanales</taxon>
        <taxon>Solanaceae</taxon>
        <taxon>Solanoideae</taxon>
        <taxon>Solaneae</taxon>
        <taxon>Solanum</taxon>
    </lineage>
</organism>
<accession>Q2MII7</accession>
<proteinExistence type="inferred from homology"/>
<geneLocation type="chloroplast"/>
<sequence length="750" mass="83047">MIIRSPEPEVKILVDRDPVKTSFEEWARPGHFSRTIAKGPDTTTWIWNLHADAHDFDSHTSDLEEISRKVFSAHFGQLSIIFLWLSGMYFHGARFSNYEAWLSDPTHIGPSAQVVWPIVGQEILNGDVGGGFRGIQITSGFFQLWRASGITSELQLYCTAIGALVFAALMLFAGWFHYHKAAPKLAWFQDVESMLNHHLAGLLGLGSLSWAGHQVHVSLPINQFLNAGVDPKEIPLPHEFILNRDLLAQLYPSFAEGATPFFTLNWSKYADFLTFRGGLDPVTGGLWLTDIAHHHLAIAILFLIAGHMYRTNWGIGHGLKDILEAHKGPFTGQGHKGLYEILTTSWHAQLSLNLAMLGSLTIVVAHHMYSMPPYPYLATDYGTQLSLFTHHMWIGGFLIVGAAAHAAIFMVRDYDPTTRYNDLLDRVLRHRDAIISHLNWACIFLGFHSFGLYIHNDTMSALGRPQDMFSDTAIQLQPVFAQWIQNTHALAPGATAPGATASTSLTWGGGDLVAVGGKVALLPIPLGTADFLVHHIHAFTIHVTVLILLKGVLFARSSRLIPDKANLGFRFPCDGPGRGGTCQVSAWDHVFLGLFWMYNSISVVIFHFSWKMQSDVWGSVSDQGVVTHITGGNFAQSSITINGWLRDFLWAQASQVIQSYGSSLSAYGLFFLGAHFVWAFSLMFLFSGRGYWQELIESIVWAHNKLKVAPATQPRALSIIQGRAVGVTHYLLGGIATTWAFFLARIIAVG</sequence>
<keyword id="KW-0004">4Fe-4S</keyword>
<keyword id="KW-0148">Chlorophyll</keyword>
<keyword id="KW-0150">Chloroplast</keyword>
<keyword id="KW-0157">Chromophore</keyword>
<keyword id="KW-0249">Electron transport</keyword>
<keyword id="KW-0408">Iron</keyword>
<keyword id="KW-0411">Iron-sulfur</keyword>
<keyword id="KW-0460">Magnesium</keyword>
<keyword id="KW-0472">Membrane</keyword>
<keyword id="KW-0479">Metal-binding</keyword>
<keyword id="KW-0560">Oxidoreductase</keyword>
<keyword id="KW-0602">Photosynthesis</keyword>
<keyword id="KW-0603">Photosystem I</keyword>
<keyword id="KW-0934">Plastid</keyword>
<keyword id="KW-0793">Thylakoid</keyword>
<keyword id="KW-0812">Transmembrane</keyword>
<keyword id="KW-1133">Transmembrane helix</keyword>
<keyword id="KW-0813">Transport</keyword>